<protein>
    <recommendedName>
        <fullName evidence="9">Acyl-CoA-binding domain-containing protein 5</fullName>
        <shortName evidence="8">Acyl-CoA binding protein 5</shortName>
        <shortName evidence="8">OsACBP5</shortName>
    </recommendedName>
</protein>
<organism>
    <name type="scientific">Oryza sativa subsp. japonica</name>
    <name type="common">Rice</name>
    <dbReference type="NCBI Taxonomy" id="39947"/>
    <lineage>
        <taxon>Eukaryota</taxon>
        <taxon>Viridiplantae</taxon>
        <taxon>Streptophyta</taxon>
        <taxon>Embryophyta</taxon>
        <taxon>Tracheophyta</taxon>
        <taxon>Spermatophyta</taxon>
        <taxon>Magnoliopsida</taxon>
        <taxon>Liliopsida</taxon>
        <taxon>Poales</taxon>
        <taxon>Poaceae</taxon>
        <taxon>BOP clade</taxon>
        <taxon>Oryzoideae</taxon>
        <taxon>Oryzeae</taxon>
        <taxon>Oryzinae</taxon>
        <taxon>Oryza</taxon>
        <taxon>Oryza sativa</taxon>
    </lineage>
</organism>
<name>ACBP5_ORYSJ</name>
<proteinExistence type="evidence at transcript level"/>
<accession>Q10P83</accession>
<accession>Q10P82</accession>
<evidence type="ECO:0000250" key="1">
    <source>
        <dbReference type="UniProtKB" id="P07107"/>
    </source>
</evidence>
<evidence type="ECO:0000255" key="2"/>
<evidence type="ECO:0000255" key="3">
    <source>
        <dbReference type="PROSITE-ProRule" id="PRU00498"/>
    </source>
</evidence>
<evidence type="ECO:0000255" key="4">
    <source>
        <dbReference type="PROSITE-ProRule" id="PRU00573"/>
    </source>
</evidence>
<evidence type="ECO:0000256" key="5">
    <source>
        <dbReference type="SAM" id="MobiDB-lite"/>
    </source>
</evidence>
<evidence type="ECO:0000269" key="6">
    <source>
    </source>
</evidence>
<evidence type="ECO:0000269" key="7">
    <source>
    </source>
</evidence>
<evidence type="ECO:0000303" key="8">
    <source>
    </source>
</evidence>
<evidence type="ECO:0000305" key="9"/>
<evidence type="ECO:0000312" key="10">
    <source>
        <dbReference type="EMBL" id="ABF94918.1"/>
    </source>
</evidence>
<evidence type="ECO:0000312" key="11">
    <source>
        <dbReference type="EMBL" id="BAF11442.1"/>
    </source>
</evidence>
<evidence type="ECO:0000312" key="12">
    <source>
        <dbReference type="EMBL" id="EEE58680.1"/>
    </source>
</evidence>
<gene>
    <name evidence="8" type="primary">ACBP5</name>
    <name evidence="11" type="ordered locus">Os03g0243600</name>
    <name evidence="10" type="ordered locus">LOC_Os03g14000</name>
    <name evidence="12" type="ORF">OsJ_10106</name>
</gene>
<dbReference type="EMBL" id="DP000009">
    <property type="protein sequence ID" value="ABF94918.1"/>
    <property type="molecule type" value="Genomic_DNA"/>
</dbReference>
<dbReference type="EMBL" id="DP000009">
    <property type="protein sequence ID" value="ABF94919.1"/>
    <property type="status" value="ALT_SEQ"/>
    <property type="molecule type" value="Genomic_DNA"/>
</dbReference>
<dbReference type="EMBL" id="AP008209">
    <property type="protein sequence ID" value="BAF11442.1"/>
    <property type="molecule type" value="Genomic_DNA"/>
</dbReference>
<dbReference type="EMBL" id="AP014959">
    <property type="protein sequence ID" value="BAS83214.1"/>
    <property type="molecule type" value="Genomic_DNA"/>
</dbReference>
<dbReference type="EMBL" id="CM000140">
    <property type="protein sequence ID" value="EEE58680.1"/>
    <property type="molecule type" value="Genomic_DNA"/>
</dbReference>
<dbReference type="EMBL" id="AK072916">
    <property type="protein sequence ID" value="BAG93201.1"/>
    <property type="molecule type" value="mRNA"/>
</dbReference>
<dbReference type="STRING" id="39947.Q10P83"/>
<dbReference type="GlyCosmos" id="Q10P83">
    <property type="glycosylation" value="1 site, No reported glycans"/>
</dbReference>
<dbReference type="PaxDb" id="39947-Q10P83"/>
<dbReference type="EnsemblPlants" id="Os03t0243600-01">
    <property type="protein sequence ID" value="Os03t0243600-01"/>
    <property type="gene ID" value="Os03g0243600"/>
</dbReference>
<dbReference type="Gramene" id="Os03t0243600-01">
    <property type="protein sequence ID" value="Os03t0243600-01"/>
    <property type="gene ID" value="Os03g0243600"/>
</dbReference>
<dbReference type="KEGG" id="dosa:Os03g0243600"/>
<dbReference type="KEGG" id="osa:4332223"/>
<dbReference type="eggNOG" id="KOG0817">
    <property type="taxonomic scope" value="Eukaryota"/>
</dbReference>
<dbReference type="HOGENOM" id="CLU_505658_0_0_1"/>
<dbReference type="InParanoid" id="Q10P83"/>
<dbReference type="OMA" id="IDVKQHH"/>
<dbReference type="OrthoDB" id="71307at2759"/>
<dbReference type="Proteomes" id="UP000000763">
    <property type="component" value="Chromosome 3"/>
</dbReference>
<dbReference type="Proteomes" id="UP000007752">
    <property type="component" value="Chromosome 3"/>
</dbReference>
<dbReference type="Proteomes" id="UP000059680">
    <property type="component" value="Chromosome 3"/>
</dbReference>
<dbReference type="GO" id="GO:0005783">
    <property type="term" value="C:endoplasmic reticulum"/>
    <property type="evidence" value="ECO:0007669"/>
    <property type="project" value="UniProtKB-SubCell"/>
</dbReference>
<dbReference type="GO" id="GO:0000062">
    <property type="term" value="F:fatty-acyl-CoA binding"/>
    <property type="evidence" value="ECO:0000318"/>
    <property type="project" value="GO_Central"/>
</dbReference>
<dbReference type="GO" id="GO:0006631">
    <property type="term" value="P:fatty acid metabolic process"/>
    <property type="evidence" value="ECO:0000318"/>
    <property type="project" value="GO_Central"/>
</dbReference>
<dbReference type="Gene3D" id="1.20.80.10">
    <property type="match status" value="1"/>
</dbReference>
<dbReference type="InterPro" id="IPR000582">
    <property type="entry name" value="Acyl-CoA-binding_protein"/>
</dbReference>
<dbReference type="InterPro" id="IPR035984">
    <property type="entry name" value="Acyl-CoA-binding_sf"/>
</dbReference>
<dbReference type="InterPro" id="IPR014352">
    <property type="entry name" value="FERM/acyl-CoA-bd_prot_sf"/>
</dbReference>
<dbReference type="PANTHER" id="PTHR23310:SF105">
    <property type="entry name" value="ACYL-COA-BINDING DOMAIN-CONTAINING PROTEIN 5"/>
    <property type="match status" value="1"/>
</dbReference>
<dbReference type="PANTHER" id="PTHR23310">
    <property type="entry name" value="ACYL-COA-BINDING PROTEIN, ACBP"/>
    <property type="match status" value="1"/>
</dbReference>
<dbReference type="Pfam" id="PF00887">
    <property type="entry name" value="ACBP"/>
    <property type="match status" value="1"/>
</dbReference>
<dbReference type="SUPFAM" id="SSF47027">
    <property type="entry name" value="Acyl-CoA binding protein"/>
    <property type="match status" value="1"/>
</dbReference>
<dbReference type="PROSITE" id="PS51228">
    <property type="entry name" value="ACB_2"/>
    <property type="match status" value="1"/>
</dbReference>
<comment type="function">
    <text evidence="6 7">Binds medium- and long-chain acyl-CoA esters with high affinity. Can interact in vitro with palmitoyl-CoA and linolenoyl-CoA (PubMed:21128943). Binds phosphatidic acid (PA) and phosphatidylcholine (PC) in vitro. May play a role in the biosynthesis of phospholipids (PubMed:24738983).</text>
</comment>
<comment type="subcellular location">
    <subcellularLocation>
        <location evidence="7">Endoplasmic reticulum</location>
    </subcellularLocation>
</comment>
<comment type="tissue specificity">
    <text evidence="6">Highly expressed in seeds and leaves. Expressed at low levels in roots.</text>
</comment>
<comment type="induction">
    <text evidence="6">Induced by salt stress and infection with the rice blast fungus Magnaporthe oryzae. Down-regulated by cold stress and wounding.</text>
</comment>
<comment type="similarity">
    <text evidence="9">Belongs to the ACBP family.</text>
</comment>
<comment type="sequence caution" evidence="9">
    <conflict type="erroneous gene model prediction">
        <sequence resource="EMBL-CDS" id="ABF94919"/>
    </conflict>
</comment>
<feature type="signal peptide" evidence="2">
    <location>
        <begin position="1"/>
        <end position="31"/>
    </location>
</feature>
<feature type="chain" id="PRO_0000442035" description="Acyl-CoA-binding domain-containing protein 5" evidence="2">
    <location>
        <begin position="32"/>
        <end position="569"/>
    </location>
</feature>
<feature type="domain" description="ACB" evidence="4">
    <location>
        <begin position="415"/>
        <end position="506"/>
    </location>
</feature>
<feature type="region of interest" description="Disordered" evidence="5">
    <location>
        <begin position="533"/>
        <end position="569"/>
    </location>
</feature>
<feature type="compositionally biased region" description="Polar residues" evidence="5">
    <location>
        <begin position="533"/>
        <end position="544"/>
    </location>
</feature>
<feature type="compositionally biased region" description="Polar residues" evidence="5">
    <location>
        <begin position="552"/>
        <end position="569"/>
    </location>
</feature>
<feature type="binding site" evidence="1">
    <location>
        <position position="474"/>
    </location>
    <ligand>
        <name>an acyl-CoA</name>
        <dbReference type="ChEBI" id="CHEBI:58342"/>
    </ligand>
</feature>
<feature type="binding site" evidence="1">
    <location>
        <position position="493"/>
    </location>
    <ligand>
        <name>an acyl-CoA</name>
        <dbReference type="ChEBI" id="CHEBI:58342"/>
    </ligand>
</feature>
<feature type="glycosylation site" description="N-linked (GlcNAc...) asparagine" evidence="3">
    <location>
        <position position="508"/>
    </location>
</feature>
<sequence>MELFYELLLTAAASLLVAFLLARLLASAATASDPRRRAPDHAAVIAEEEAVVVEEERIIEVDEVEVKSARARECVVSEGWVEVGRASSAEGKLECLPEEEEAPAKAARELVLDAVLEEREEEGQVGEERCDLAAAVAEVVGVKPHELGVEAAPGEVSDVTLEEGKVQDVGVEQHDLVAEAAPREALDTGLEKQGVPIIEAVEIKRQDDLGAEVAPSDVPEVEFEQQGVRIIEAIDVNQHHRVALAAPAEVVDAGLEERVQAIEAGSSGLTSETVPEEVLDELSEKQEEQVIEEKEHQLAAATAPVAIPGVALAETEELKEEQSSEKAVNVHEEVQSKDEAKCKLHLVDQQEGSASKVELVGRNTDNVEISHGSSSGDKMIAELTEEELTLQGVPADETQTDMEFGEWEGIERTEIEKRFGVAAAFASSDAGMAALSKLDSDVQLQLQGLLKVAIDGPCYDSTQPLTLRPSSRAKWAAWQKLGNMYPETAMERYMNLLSEAIPGWMGDNISGTKEHEAGDDAVGSVLTMTSNTINQHDSQGNEDNTGMYEGHLTSSPNPEKGQSSDIPAE</sequence>
<keyword id="KW-0256">Endoplasmic reticulum</keyword>
<keyword id="KW-0325">Glycoprotein</keyword>
<keyword id="KW-0446">Lipid-binding</keyword>
<keyword id="KW-1185">Reference proteome</keyword>
<keyword id="KW-0732">Signal</keyword>
<reference key="1">
    <citation type="journal article" date="2005" name="Genome Res.">
        <title>Sequence, annotation, and analysis of synteny between rice chromosome 3 and diverged grass species.</title>
        <authorList>
            <consortium name="The rice chromosome 3 sequencing consortium"/>
            <person name="Buell C.R."/>
            <person name="Yuan Q."/>
            <person name="Ouyang S."/>
            <person name="Liu J."/>
            <person name="Zhu W."/>
            <person name="Wang A."/>
            <person name="Maiti R."/>
            <person name="Haas B."/>
            <person name="Wortman J."/>
            <person name="Pertea M."/>
            <person name="Jones K.M."/>
            <person name="Kim M."/>
            <person name="Overton L."/>
            <person name="Tsitrin T."/>
            <person name="Fadrosh D."/>
            <person name="Bera J."/>
            <person name="Weaver B."/>
            <person name="Jin S."/>
            <person name="Johri S."/>
            <person name="Reardon M."/>
            <person name="Webb K."/>
            <person name="Hill J."/>
            <person name="Moffat K."/>
            <person name="Tallon L."/>
            <person name="Van Aken S."/>
            <person name="Lewis M."/>
            <person name="Utterback T."/>
            <person name="Feldblyum T."/>
            <person name="Zismann V."/>
            <person name="Iobst S."/>
            <person name="Hsiao J."/>
            <person name="de Vazeille A.R."/>
            <person name="Salzberg S.L."/>
            <person name="White O."/>
            <person name="Fraser C.M."/>
            <person name="Yu Y."/>
            <person name="Kim H."/>
            <person name="Rambo T."/>
            <person name="Currie J."/>
            <person name="Collura K."/>
            <person name="Kernodle-Thompson S."/>
            <person name="Wei F."/>
            <person name="Kudrna K."/>
            <person name="Ammiraju J.S.S."/>
            <person name="Luo M."/>
            <person name="Goicoechea J.L."/>
            <person name="Wing R.A."/>
            <person name="Henry D."/>
            <person name="Oates R."/>
            <person name="Palmer M."/>
            <person name="Pries G."/>
            <person name="Saski C."/>
            <person name="Simmons J."/>
            <person name="Soderlund C."/>
            <person name="Nelson W."/>
            <person name="de la Bastide M."/>
            <person name="Spiegel L."/>
            <person name="Nascimento L."/>
            <person name="Huang E."/>
            <person name="Preston R."/>
            <person name="Zutavern T."/>
            <person name="Palmer L."/>
            <person name="O'Shaughnessy A."/>
            <person name="Dike S."/>
            <person name="McCombie W.R."/>
            <person name="Minx P."/>
            <person name="Cordum H."/>
            <person name="Wilson R."/>
            <person name="Jin W."/>
            <person name="Lee H.R."/>
            <person name="Jiang J."/>
            <person name="Jackson S."/>
        </authorList>
    </citation>
    <scope>NUCLEOTIDE SEQUENCE [LARGE SCALE GENOMIC DNA]</scope>
    <source>
        <strain>cv. Nipponbare</strain>
    </source>
</reference>
<reference key="2">
    <citation type="journal article" date="2005" name="Nature">
        <title>The map-based sequence of the rice genome.</title>
        <authorList>
            <consortium name="International rice genome sequencing project (IRGSP)"/>
        </authorList>
    </citation>
    <scope>NUCLEOTIDE SEQUENCE [LARGE SCALE GENOMIC DNA]</scope>
    <source>
        <strain>cv. Nipponbare</strain>
    </source>
</reference>
<reference key="3">
    <citation type="journal article" date="2008" name="Nucleic Acids Res.">
        <title>The rice annotation project database (RAP-DB): 2008 update.</title>
        <authorList>
            <consortium name="The rice annotation project (RAP)"/>
        </authorList>
    </citation>
    <scope>GENOME REANNOTATION</scope>
    <source>
        <strain>cv. Nipponbare</strain>
    </source>
</reference>
<reference key="4">
    <citation type="journal article" date="2013" name="Rice">
        <title>Improvement of the Oryza sativa Nipponbare reference genome using next generation sequence and optical map data.</title>
        <authorList>
            <person name="Kawahara Y."/>
            <person name="de la Bastide M."/>
            <person name="Hamilton J.P."/>
            <person name="Kanamori H."/>
            <person name="McCombie W.R."/>
            <person name="Ouyang S."/>
            <person name="Schwartz D.C."/>
            <person name="Tanaka T."/>
            <person name="Wu J."/>
            <person name="Zhou S."/>
            <person name="Childs K.L."/>
            <person name="Davidson R.M."/>
            <person name="Lin H."/>
            <person name="Quesada-Ocampo L."/>
            <person name="Vaillancourt B."/>
            <person name="Sakai H."/>
            <person name="Lee S.S."/>
            <person name="Kim J."/>
            <person name="Numa H."/>
            <person name="Itoh T."/>
            <person name="Buell C.R."/>
            <person name="Matsumoto T."/>
        </authorList>
    </citation>
    <scope>GENOME REANNOTATION</scope>
    <source>
        <strain>cv. Nipponbare</strain>
    </source>
</reference>
<reference key="5">
    <citation type="journal article" date="2005" name="PLoS Biol.">
        <title>The genomes of Oryza sativa: a history of duplications.</title>
        <authorList>
            <person name="Yu J."/>
            <person name="Wang J."/>
            <person name="Lin W."/>
            <person name="Li S."/>
            <person name="Li H."/>
            <person name="Zhou J."/>
            <person name="Ni P."/>
            <person name="Dong W."/>
            <person name="Hu S."/>
            <person name="Zeng C."/>
            <person name="Zhang J."/>
            <person name="Zhang Y."/>
            <person name="Li R."/>
            <person name="Xu Z."/>
            <person name="Li S."/>
            <person name="Li X."/>
            <person name="Zheng H."/>
            <person name="Cong L."/>
            <person name="Lin L."/>
            <person name="Yin J."/>
            <person name="Geng J."/>
            <person name="Li G."/>
            <person name="Shi J."/>
            <person name="Liu J."/>
            <person name="Lv H."/>
            <person name="Li J."/>
            <person name="Wang J."/>
            <person name="Deng Y."/>
            <person name="Ran L."/>
            <person name="Shi X."/>
            <person name="Wang X."/>
            <person name="Wu Q."/>
            <person name="Li C."/>
            <person name="Ren X."/>
            <person name="Wang J."/>
            <person name="Wang X."/>
            <person name="Li D."/>
            <person name="Liu D."/>
            <person name="Zhang X."/>
            <person name="Ji Z."/>
            <person name="Zhao W."/>
            <person name="Sun Y."/>
            <person name="Zhang Z."/>
            <person name="Bao J."/>
            <person name="Han Y."/>
            <person name="Dong L."/>
            <person name="Ji J."/>
            <person name="Chen P."/>
            <person name="Wu S."/>
            <person name="Liu J."/>
            <person name="Xiao Y."/>
            <person name="Bu D."/>
            <person name="Tan J."/>
            <person name="Yang L."/>
            <person name="Ye C."/>
            <person name="Zhang J."/>
            <person name="Xu J."/>
            <person name="Zhou Y."/>
            <person name="Yu Y."/>
            <person name="Zhang B."/>
            <person name="Zhuang S."/>
            <person name="Wei H."/>
            <person name="Liu B."/>
            <person name="Lei M."/>
            <person name="Yu H."/>
            <person name="Li Y."/>
            <person name="Xu H."/>
            <person name="Wei S."/>
            <person name="He X."/>
            <person name="Fang L."/>
            <person name="Zhang Z."/>
            <person name="Zhang Y."/>
            <person name="Huang X."/>
            <person name="Su Z."/>
            <person name="Tong W."/>
            <person name="Li J."/>
            <person name="Tong Z."/>
            <person name="Li S."/>
            <person name="Ye J."/>
            <person name="Wang L."/>
            <person name="Fang L."/>
            <person name="Lei T."/>
            <person name="Chen C.-S."/>
            <person name="Chen H.-C."/>
            <person name="Xu Z."/>
            <person name="Li H."/>
            <person name="Huang H."/>
            <person name="Zhang F."/>
            <person name="Xu H."/>
            <person name="Li N."/>
            <person name="Zhao C."/>
            <person name="Li S."/>
            <person name="Dong L."/>
            <person name="Huang Y."/>
            <person name="Li L."/>
            <person name="Xi Y."/>
            <person name="Qi Q."/>
            <person name="Li W."/>
            <person name="Zhang B."/>
            <person name="Hu W."/>
            <person name="Zhang Y."/>
            <person name="Tian X."/>
            <person name="Jiao Y."/>
            <person name="Liang X."/>
            <person name="Jin J."/>
            <person name="Gao L."/>
            <person name="Zheng W."/>
            <person name="Hao B."/>
            <person name="Liu S.-M."/>
            <person name="Wang W."/>
            <person name="Yuan L."/>
            <person name="Cao M."/>
            <person name="McDermott J."/>
            <person name="Samudrala R."/>
            <person name="Wang J."/>
            <person name="Wong G.K.-S."/>
            <person name="Yang H."/>
        </authorList>
    </citation>
    <scope>NUCLEOTIDE SEQUENCE [LARGE SCALE GENOMIC DNA]</scope>
    <source>
        <strain>cv. Nipponbare</strain>
    </source>
</reference>
<reference key="6">
    <citation type="journal article" date="2003" name="Science">
        <title>Collection, mapping, and annotation of over 28,000 cDNA clones from japonica rice.</title>
        <authorList>
            <consortium name="The rice full-length cDNA consortium"/>
        </authorList>
    </citation>
    <scope>NUCLEOTIDE SEQUENCE [LARGE SCALE MRNA]</scope>
    <source>
        <strain>cv. Nipponbare</strain>
    </source>
</reference>
<reference key="7">
    <citation type="journal article" date="2011" name="New Phytol.">
        <title>The rice acyl-CoA-binding protein gene family: phylogeny, expression and functional analysis.</title>
        <authorList>
            <person name="Meng W."/>
            <person name="Su Y.C."/>
            <person name="Saunders R.M."/>
            <person name="Chye M.L."/>
        </authorList>
    </citation>
    <scope>FUNCTION</scope>
    <scope>TISSUE SPECIFICITY</scope>
    <scope>INDUCTION</scope>
    <scope>GENE FAMILY</scope>
    <scope>NOMENCLATURE</scope>
</reference>
<reference key="8">
    <citation type="journal article" date="2014" name="New Phytol.">
        <title>Subcellular localization of rice acyl-CoA-binding proteins (ACBPs) indicates that OsACBP6::GFP is targeted to the peroxisomes.</title>
        <authorList>
            <person name="Meng W."/>
            <person name="Hsiao A.S."/>
            <person name="Gao C."/>
            <person name="Jiang L."/>
            <person name="Chye M.L."/>
        </authorList>
    </citation>
    <scope>FUNCTION</scope>
    <scope>SUBCELLULAR LOCATION</scope>
</reference>